<reference key="1">
    <citation type="submission" date="2009-03" db="EMBL/GenBank/DDBJ databases">
        <title>Comparison of the complete genome sequences of Rhodococcus erythropolis PR4 and Rhodococcus opacus B4.</title>
        <authorList>
            <person name="Takarada H."/>
            <person name="Sekine M."/>
            <person name="Hosoyama A."/>
            <person name="Yamada R."/>
            <person name="Fujisawa T."/>
            <person name="Omata S."/>
            <person name="Shimizu A."/>
            <person name="Tsukatani N."/>
            <person name="Tanikawa S."/>
            <person name="Fujita N."/>
            <person name="Harayama S."/>
        </authorList>
    </citation>
    <scope>NUCLEOTIDE SEQUENCE [LARGE SCALE GENOMIC DNA]</scope>
    <source>
        <strain>B4</strain>
    </source>
</reference>
<sequence>MAVPKIVLFYVFTPLADPEAIRLWQYTLAEAHDLTGRILVSEHGINATVGGDIRDVKRYVKGTRSYAPFKDADIKWSDGLGNDFPRLSVKVRPEIVTFGAPGELKVDADGVVGGGTHLAPEEVHRLVEGRGDDVVFFDGRNGFEAEIGRFRDAVVPDVSTTRDFVHELDSGKYDHLKDKAVVTYCTGGVRCEVLSSLMRSRGFGEVYQLDGGIVRYGEAFGDTGLWEGSLYVFDKRMTIEFSDQAKTLGRCTRCGGPTSRYENLPDDRGRELVLVCAGCTENRAG</sequence>
<organism>
    <name type="scientific">Rhodococcus opacus (strain B4)</name>
    <dbReference type="NCBI Taxonomy" id="632772"/>
    <lineage>
        <taxon>Bacteria</taxon>
        <taxon>Bacillati</taxon>
        <taxon>Actinomycetota</taxon>
        <taxon>Actinomycetes</taxon>
        <taxon>Mycobacteriales</taxon>
        <taxon>Nocardiaceae</taxon>
        <taxon>Rhodococcus</taxon>
    </lineage>
</organism>
<gene>
    <name evidence="1" type="primary">trhO</name>
    <name type="ordered locus">ROP_05950</name>
</gene>
<name>TRHO_RHOOB</name>
<dbReference type="EC" id="1.14.-.-" evidence="1"/>
<dbReference type="EMBL" id="AP011115">
    <property type="protein sequence ID" value="BAH48842.1"/>
    <property type="molecule type" value="Genomic_DNA"/>
</dbReference>
<dbReference type="RefSeq" id="WP_012687847.1">
    <property type="nucleotide sequence ID" value="NC_012522.1"/>
</dbReference>
<dbReference type="SMR" id="C1ASR0"/>
<dbReference type="STRING" id="632772.ROP_05950"/>
<dbReference type="KEGG" id="rop:ROP_05950"/>
<dbReference type="PATRIC" id="fig|632772.20.peg.653"/>
<dbReference type="HOGENOM" id="CLU_038878_1_0_11"/>
<dbReference type="OrthoDB" id="9778326at2"/>
<dbReference type="Proteomes" id="UP000002212">
    <property type="component" value="Chromosome"/>
</dbReference>
<dbReference type="GO" id="GO:0016705">
    <property type="term" value="F:oxidoreductase activity, acting on paired donors, with incorporation or reduction of molecular oxygen"/>
    <property type="evidence" value="ECO:0007669"/>
    <property type="project" value="UniProtKB-UniRule"/>
</dbReference>
<dbReference type="GO" id="GO:0006400">
    <property type="term" value="P:tRNA modification"/>
    <property type="evidence" value="ECO:0007669"/>
    <property type="project" value="UniProtKB-UniRule"/>
</dbReference>
<dbReference type="CDD" id="cd01518">
    <property type="entry name" value="RHOD_YceA"/>
    <property type="match status" value="1"/>
</dbReference>
<dbReference type="Gene3D" id="3.30.70.100">
    <property type="match status" value="1"/>
</dbReference>
<dbReference type="Gene3D" id="3.40.250.10">
    <property type="entry name" value="Rhodanese-like domain"/>
    <property type="match status" value="1"/>
</dbReference>
<dbReference type="HAMAP" id="MF_00469">
    <property type="entry name" value="TrhO"/>
    <property type="match status" value="1"/>
</dbReference>
<dbReference type="InterPro" id="IPR001763">
    <property type="entry name" value="Rhodanese-like_dom"/>
</dbReference>
<dbReference type="InterPro" id="IPR036873">
    <property type="entry name" value="Rhodanese-like_dom_sf"/>
</dbReference>
<dbReference type="InterPro" id="IPR022111">
    <property type="entry name" value="Rhodanese_C"/>
</dbReference>
<dbReference type="InterPro" id="IPR020936">
    <property type="entry name" value="TrhO"/>
</dbReference>
<dbReference type="InterPro" id="IPR040503">
    <property type="entry name" value="TRHO_N"/>
</dbReference>
<dbReference type="NCBIfam" id="NF001134">
    <property type="entry name" value="PRK00142.1-2"/>
    <property type="match status" value="1"/>
</dbReference>
<dbReference type="PANTHER" id="PTHR43268">
    <property type="entry name" value="THIOSULFATE SULFURTRANSFERASE/RHODANESE-LIKE DOMAIN-CONTAINING PROTEIN 2"/>
    <property type="match status" value="1"/>
</dbReference>
<dbReference type="PANTHER" id="PTHR43268:SF6">
    <property type="entry name" value="THIOSULFATE SULFURTRANSFERASE_RHODANESE-LIKE DOMAIN-CONTAINING PROTEIN 2"/>
    <property type="match status" value="1"/>
</dbReference>
<dbReference type="Pfam" id="PF00581">
    <property type="entry name" value="Rhodanese"/>
    <property type="match status" value="1"/>
</dbReference>
<dbReference type="Pfam" id="PF12368">
    <property type="entry name" value="Rhodanese_C"/>
    <property type="match status" value="1"/>
</dbReference>
<dbReference type="Pfam" id="PF17773">
    <property type="entry name" value="UPF0176_N"/>
    <property type="match status" value="1"/>
</dbReference>
<dbReference type="SMART" id="SM00450">
    <property type="entry name" value="RHOD"/>
    <property type="match status" value="1"/>
</dbReference>
<dbReference type="SUPFAM" id="SSF52821">
    <property type="entry name" value="Rhodanese/Cell cycle control phosphatase"/>
    <property type="match status" value="1"/>
</dbReference>
<dbReference type="PROSITE" id="PS50206">
    <property type="entry name" value="RHODANESE_3"/>
    <property type="match status" value="1"/>
</dbReference>
<protein>
    <recommendedName>
        <fullName evidence="1">tRNA uridine(34) hydroxylase</fullName>
        <ecNumber evidence="1">1.14.-.-</ecNumber>
    </recommendedName>
    <alternativeName>
        <fullName evidence="1">tRNA hydroxylation protein O</fullName>
    </alternativeName>
</protein>
<evidence type="ECO:0000255" key="1">
    <source>
        <dbReference type="HAMAP-Rule" id="MF_00469"/>
    </source>
</evidence>
<feature type="chain" id="PRO_1000135474" description="tRNA uridine(34) hydroxylase">
    <location>
        <begin position="1"/>
        <end position="285"/>
    </location>
</feature>
<feature type="domain" description="Rhodanese" evidence="1">
    <location>
        <begin position="130"/>
        <end position="225"/>
    </location>
</feature>
<feature type="active site" description="Cysteine persulfide intermediate" evidence="1">
    <location>
        <position position="185"/>
    </location>
</feature>
<accession>C1ASR0</accession>
<proteinExistence type="inferred from homology"/>
<comment type="function">
    <text evidence="1">Catalyzes oxygen-dependent 5-hydroxyuridine (ho5U) modification at position 34 in tRNAs.</text>
</comment>
<comment type="catalytic activity">
    <reaction evidence="1">
        <text>uridine(34) in tRNA + AH2 + O2 = 5-hydroxyuridine(34) in tRNA + A + H2O</text>
        <dbReference type="Rhea" id="RHEA:64224"/>
        <dbReference type="Rhea" id="RHEA-COMP:11727"/>
        <dbReference type="Rhea" id="RHEA-COMP:13381"/>
        <dbReference type="ChEBI" id="CHEBI:13193"/>
        <dbReference type="ChEBI" id="CHEBI:15377"/>
        <dbReference type="ChEBI" id="CHEBI:15379"/>
        <dbReference type="ChEBI" id="CHEBI:17499"/>
        <dbReference type="ChEBI" id="CHEBI:65315"/>
        <dbReference type="ChEBI" id="CHEBI:136877"/>
    </reaction>
</comment>
<comment type="similarity">
    <text evidence="1">Belongs to the TrhO family.</text>
</comment>
<keyword id="KW-0560">Oxidoreductase</keyword>
<keyword id="KW-0819">tRNA processing</keyword>